<name>PLD_PHYIN</name>
<proteinExistence type="inferred from homology"/>
<feature type="chain" id="PRO_0000239465" description="Phospholipase D">
    <location>
        <begin position="1"/>
        <end position="1807"/>
    </location>
</feature>
<feature type="transmembrane region" description="Helical" evidence="1">
    <location>
        <begin position="257"/>
        <end position="277"/>
    </location>
</feature>
<feature type="transmembrane region" description="Helical" evidence="1">
    <location>
        <begin position="305"/>
        <end position="325"/>
    </location>
</feature>
<feature type="transmembrane region" description="Helical" evidence="1">
    <location>
        <begin position="587"/>
        <end position="607"/>
    </location>
</feature>
<feature type="domain" description="PLD phosphodiesterase 1" evidence="2">
    <location>
        <begin position="853"/>
        <end position="880"/>
    </location>
</feature>
<feature type="domain" description="PLD phosphodiesterase 2" evidence="2">
    <location>
        <begin position="1249"/>
        <end position="1276"/>
    </location>
</feature>
<feature type="region of interest" description="Disordered" evidence="3">
    <location>
        <begin position="1"/>
        <end position="28"/>
    </location>
</feature>
<feature type="region of interest" description="Disordered" evidence="3">
    <location>
        <begin position="697"/>
        <end position="734"/>
    </location>
</feature>
<feature type="region of interest" description="Disordered" evidence="3">
    <location>
        <begin position="1531"/>
        <end position="1621"/>
    </location>
</feature>
<feature type="compositionally biased region" description="Polar residues" evidence="3">
    <location>
        <begin position="1531"/>
        <end position="1547"/>
    </location>
</feature>
<feature type="compositionally biased region" description="Polar residues" evidence="3">
    <location>
        <begin position="1568"/>
        <end position="1578"/>
    </location>
</feature>
<feature type="compositionally biased region" description="Polar residues" evidence="3">
    <location>
        <begin position="1597"/>
        <end position="1614"/>
    </location>
</feature>
<feature type="active site" evidence="2">
    <location>
        <position position="858"/>
    </location>
</feature>
<feature type="active site" evidence="2">
    <location>
        <position position="860"/>
    </location>
</feature>
<feature type="active site" evidence="2">
    <location>
        <position position="865"/>
    </location>
</feature>
<feature type="active site" evidence="2">
    <location>
        <position position="1254"/>
    </location>
</feature>
<feature type="active site" evidence="2">
    <location>
        <position position="1256"/>
    </location>
</feature>
<feature type="active site" evidence="2">
    <location>
        <position position="1261"/>
    </location>
</feature>
<gene>
    <name evidence="4" type="primary">PLD</name>
</gene>
<keyword id="KW-0378">Hydrolase</keyword>
<keyword id="KW-0442">Lipid degradation</keyword>
<keyword id="KW-0443">Lipid metabolism</keyword>
<keyword id="KW-0472">Membrane</keyword>
<keyword id="KW-0677">Repeat</keyword>
<keyword id="KW-0812">Transmembrane</keyword>
<keyword id="KW-1133">Transmembrane helix</keyword>
<comment type="function">
    <text evidence="5">Hydrolyzes glycerol-phospholipids at the terminal phosphodiesteric bond.</text>
</comment>
<comment type="catalytic activity">
    <reaction evidence="5">
        <text>a 1,2-diacyl-sn-glycero-3-phosphocholine + H2O = a 1,2-diacyl-sn-glycero-3-phosphate + choline + H(+)</text>
        <dbReference type="Rhea" id="RHEA:14445"/>
        <dbReference type="ChEBI" id="CHEBI:15354"/>
        <dbReference type="ChEBI" id="CHEBI:15377"/>
        <dbReference type="ChEBI" id="CHEBI:15378"/>
        <dbReference type="ChEBI" id="CHEBI:57643"/>
        <dbReference type="ChEBI" id="CHEBI:58608"/>
        <dbReference type="EC" id="3.1.4.4"/>
    </reaction>
</comment>
<comment type="subcellular location">
    <subcellularLocation>
        <location evidence="1">Membrane</location>
        <topology evidence="1">Multi-pass membrane protein</topology>
    </subcellularLocation>
</comment>
<comment type="similarity">
    <text evidence="1 5">Belongs to the phospholipase D family. TM-PLD subfamily.</text>
</comment>
<protein>
    <recommendedName>
        <fullName>Phospholipase D</fullName>
        <ecNumber>3.1.4.4</ecNumber>
    </recommendedName>
    <alternativeName>
        <fullName>PiPLD1</fullName>
    </alternativeName>
</protein>
<accession>Q5BMR2</accession>
<organism>
    <name type="scientific">Phytophthora infestans</name>
    <name type="common">Potato late blight agent</name>
    <name type="synonym">Botrytis infestans</name>
    <dbReference type="NCBI Taxonomy" id="4787"/>
    <lineage>
        <taxon>Eukaryota</taxon>
        <taxon>Sar</taxon>
        <taxon>Stramenopiles</taxon>
        <taxon>Oomycota</taxon>
        <taxon>Peronosporales</taxon>
        <taxon>Peronosporaceae</taxon>
        <taxon>Phytophthora</taxon>
    </lineage>
</organism>
<evidence type="ECO:0000255" key="1"/>
<evidence type="ECO:0000255" key="2">
    <source>
        <dbReference type="PROSITE-ProRule" id="PRU00153"/>
    </source>
</evidence>
<evidence type="ECO:0000256" key="3">
    <source>
        <dbReference type="SAM" id="MobiDB-lite"/>
    </source>
</evidence>
<evidence type="ECO:0000303" key="4">
    <source>
    </source>
</evidence>
<evidence type="ECO:0000305" key="5"/>
<evidence type="ECO:0000312" key="6">
    <source>
        <dbReference type="EMBL" id="AAX28839.1"/>
    </source>
</evidence>
<dbReference type="EC" id="3.1.4.4"/>
<dbReference type="EMBL" id="AY929154">
    <property type="protein sequence ID" value="AAX28839.1"/>
    <property type="molecule type" value="Genomic_DNA"/>
</dbReference>
<dbReference type="SMR" id="Q5BMR2"/>
<dbReference type="VEuPathDB" id="FungiDB:PITG_00284"/>
<dbReference type="BRENDA" id="3.1.4.4">
    <property type="organism ID" value="4811"/>
</dbReference>
<dbReference type="GO" id="GO:0016020">
    <property type="term" value="C:membrane"/>
    <property type="evidence" value="ECO:0000303"/>
    <property type="project" value="UniProtKB"/>
</dbReference>
<dbReference type="GO" id="GO:0005886">
    <property type="term" value="C:plasma membrane"/>
    <property type="evidence" value="ECO:0007669"/>
    <property type="project" value="TreeGrafter"/>
</dbReference>
<dbReference type="GO" id="GO:0004630">
    <property type="term" value="F:phospholipase D activity"/>
    <property type="evidence" value="ECO:0000303"/>
    <property type="project" value="UniProtKB"/>
</dbReference>
<dbReference type="GO" id="GO:0046475">
    <property type="term" value="P:glycerophospholipid catabolic process"/>
    <property type="evidence" value="ECO:0000303"/>
    <property type="project" value="UniProtKB"/>
</dbReference>
<dbReference type="CDD" id="cd09138">
    <property type="entry name" value="PLDc_vPLD1_2_yPLD_like_1"/>
    <property type="match status" value="1"/>
</dbReference>
<dbReference type="CDD" id="cd09141">
    <property type="entry name" value="PLDc_vPLD1_2_yPLD_like_2"/>
    <property type="match status" value="1"/>
</dbReference>
<dbReference type="FunFam" id="3.30.870.10:FF:000011">
    <property type="entry name" value="Phospholipase"/>
    <property type="match status" value="1"/>
</dbReference>
<dbReference type="Gene3D" id="3.30.870.10">
    <property type="entry name" value="Endonuclease Chain A"/>
    <property type="match status" value="2"/>
</dbReference>
<dbReference type="InterPro" id="IPR001736">
    <property type="entry name" value="PLipase_D/transphosphatidylase"/>
</dbReference>
<dbReference type="InterPro" id="IPR015679">
    <property type="entry name" value="PLipase_D_fam"/>
</dbReference>
<dbReference type="PANTHER" id="PTHR18896:SF76">
    <property type="entry name" value="PHOSPHOLIPASE"/>
    <property type="match status" value="1"/>
</dbReference>
<dbReference type="PANTHER" id="PTHR18896">
    <property type="entry name" value="PHOSPHOLIPASE D"/>
    <property type="match status" value="1"/>
</dbReference>
<dbReference type="Pfam" id="PF00614">
    <property type="entry name" value="PLDc"/>
    <property type="match status" value="2"/>
</dbReference>
<dbReference type="SMART" id="SM00155">
    <property type="entry name" value="PLDc"/>
    <property type="match status" value="2"/>
</dbReference>
<dbReference type="SUPFAM" id="SSF56024">
    <property type="entry name" value="Phospholipase D/nuclease"/>
    <property type="match status" value="2"/>
</dbReference>
<dbReference type="PROSITE" id="PS50035">
    <property type="entry name" value="PLD"/>
    <property type="match status" value="2"/>
</dbReference>
<sequence>MPGPDDDVREPTAAARTNNSGYGLRAAPSSITSGLDSVVSVNSYRSSELNAEEVNVDDQECADSDILESPNDGMTIMNDDDADLSEEEEEVMENSIDFSVNRATVTKAGVIPCCVFVGRVRWGTTDWEIYFGQKQLLRLHFNLHLYSLFNRHKLLRGVHLPCTIWREKRAEKRVMDVYVVQDYIRQLLKDRDLRNSEPLLSFLEVSPSRAMLRLGPSLKEGYVHMRINGPFQLPLYTCFNRTIEALYRHLYRAWMRIAFVSAIVGFIFPICLVIVTSLPTFFSPQKELVNSDSGTKEVSTKLNTAGVFLGLAVLGGILFFAVFVYKFFQHRLGVIRRWVVLKPSCFAAYRNRNDREPSEVFLFDKNFTARKGSYRQGVSWMPSGLVVGSKAGDIEIDTGHYYTRLTAFVALMGVCYGIMRLSNSIYDFEYLSLDKSMGVPITNASGYENWTESRDAEYCGYYFIVPKGTTVYVESKDDSAVISQLQMPSSNSMTANLGFFWQSDSMGYSLNVITNAVGAGTMVSVVKPIDAKNDRFFESGTNYSMPTVGNLTLEGVKTDIDVQSFSNVESFCAITVRIAPLTWRSYVYYILFLFAGGIIAPVVGFLANYFVTYLGIWHPHVRRDHWFRCVRRLQKLKRQETSTRFNSFAPQHISTIDDDESATITAKAKAAKLAIGNTPTSNINQVVDSVVKQEAETASRMGTGNLAPASSRVDSSTQSEDSFEAPKPPPSSVSWHVDAEDTYAAMYKAISNAKYEILIAGWWVCPDLFLLRPGRKLPPREADEDPDGQQVNKTMLRQVLMKKAEAGVKIYVLIYREVKLALTLNSAYTKRSLMVHPNIRVLRDPIFQIQSLGFWSHHEKIVCIDQSLAFVGGLDLCFGRYDHHGHPISDPSDDPVWTGKDYSNPIIKDFVRVNKPFEDLIDRASQPRMPWHDVHCSISGPPVQDVAYHLIQRWNFVCSKNDYQLRTGWCICFRSRRFKFLPKCLVPMDFNGWTLQYPSSDPEPMRDGSTRTTIPLVREDSLSMVEPFQVVQSVNPMYPCTATGPQWPPTSSLHPINPMRPPLTSASTTTGPLDDGEVLRAQRGESILQVFHPSANICNIQVCRSVSMWSAGVPTEASIQAAYMDVIANSKHFLYIENQFFVSGMDGNGIVRNRILQALVDRIERAVQRDEKFRVYVVMPLLPAFEGNIRSHELTNLHAVMHWQFATICRGRYSLFEALKGVTNHPENYVAFFGLRKYGIMPNGCAATEQIYIHSKLMIADDRCAILGSANINDRSMNGDRDSEIALVIEDMQYEDGVMNEKPYRRGVAASKLRLQLFREHLGLADDDLSVADPTSDHTWQAIKSTASSNTKIFEAVFDCAPSNRMRAFVNFQSIEVTQIFENQRMNVLKVPGRSHVWDAQNLKDGDYAPWTDVNGVPIAADRVDLRDFEVDNYRDKKKKLFSMDHDGWCYARNFSIFQEVRTMKTDYKKREKLQHLVADRLMAQVRRRRWVKKGLLPPRDPRESSFSLASDDEEHGRFYSLWRRLQQGDFSRSNSVSTPTNFSQLDTDGGISGSVSVGGTNHGRRLYNSNSMPSNASILGDNPTTRPPVLGDAPSYPNSPSVASFQHTPQSPAIATGARSVRSARTSSLLCTGAGVRTRGNTRSARGSFYGMFSVTGNRNLDTDDESSDAGSEYGGGHGIRASLKRWYSTMDVLDFGRRSKFNAEYFDTDEDHLHSDDPLLEDGRGSYHAATREGLLTEEAVEGSDDEDAECQIGHVQTAATVRKEDETRARAQLSEIRGHLVEFPLDFLVEEILKPSVLPADIHI</sequence>
<reference evidence="6" key="1">
    <citation type="journal article" date="2005" name="Gene">
        <title>A transmembrane phospholipase D in Phytophthora; a novel PLD subfamily.</title>
        <authorList>
            <person name="Meijer H.J.G."/>
            <person name="Latijnhouwers M."/>
            <person name="Ligterink W."/>
            <person name="Govers F."/>
        </authorList>
    </citation>
    <scope>NUCLEOTIDE SEQUENCE [GENOMIC DNA]</scope>
</reference>